<evidence type="ECO:0000250" key="1">
    <source>
        <dbReference type="UniProtKB" id="P62960"/>
    </source>
</evidence>
<evidence type="ECO:0000250" key="2">
    <source>
        <dbReference type="UniProtKB" id="P67809"/>
    </source>
</evidence>
<evidence type="ECO:0000250" key="3">
    <source>
        <dbReference type="UniProtKB" id="Q28618"/>
    </source>
</evidence>
<evidence type="ECO:0000256" key="4">
    <source>
        <dbReference type="SAM" id="MobiDB-lite"/>
    </source>
</evidence>
<evidence type="ECO:0000303" key="5">
    <source>
    </source>
</evidence>
<evidence type="ECO:0000305" key="6"/>
<name>YBOX1_BOVIN</name>
<reference key="1">
    <citation type="journal article" date="1993" name="Gene">
        <title>Isolation of the CCAAT transcription factor subunit EFIA cDNA and a potentially functional EFIA processed pseudogene from Bos taurus: insights into the evolution of the EFIA/dbpB/YB-1 gene family.</title>
        <authorList>
            <person name="Ozer J."/>
            <person name="Chalkley R."/>
            <person name="Sealy L."/>
        </authorList>
    </citation>
    <scope>NUCLEOTIDE SEQUENCE [MRNA]</scope>
    <source>
        <tissue>Lung endothelial cell</tissue>
    </source>
</reference>
<reference key="2">
    <citation type="submission" date="2005-09" db="EMBL/GenBank/DDBJ databases">
        <authorList>
            <consortium name="NIH - Mammalian Gene Collection (MGC) project"/>
        </authorList>
    </citation>
    <scope>NUCLEOTIDE SEQUENCE [LARGE SCALE MRNA]</scope>
    <source>
        <strain>Hereford</strain>
        <tissue>Testis</tissue>
    </source>
</reference>
<keyword id="KW-0007">Acetylation</keyword>
<keyword id="KW-0010">Activator</keyword>
<keyword id="KW-0963">Cytoplasm</keyword>
<keyword id="KW-0238">DNA-binding</keyword>
<keyword id="KW-1017">Isopeptide bond</keyword>
<keyword id="KW-0497">Mitogen</keyword>
<keyword id="KW-0507">mRNA processing</keyword>
<keyword id="KW-0508">mRNA splicing</keyword>
<keyword id="KW-0539">Nucleus</keyword>
<keyword id="KW-0597">Phosphoprotein</keyword>
<keyword id="KW-1185">Reference proteome</keyword>
<keyword id="KW-0678">Repressor</keyword>
<keyword id="KW-0694">RNA-binding</keyword>
<keyword id="KW-0964">Secreted</keyword>
<keyword id="KW-0804">Transcription</keyword>
<keyword id="KW-0805">Transcription regulation</keyword>
<keyword id="KW-0832">Ubl conjugation</keyword>
<sequence length="324" mass="35924">MSSEAETQQPPAAPPAAPALSAADTKPGTTGSGAGSGGPGGLTSAAPAGGDKKVIATKVLGTVKWFNVRNGYGFINRNDTKEDVFVHQTAIKKNNPRKYLRSVGDGETVEFDVVEGEKGAEAANVTGPGGVPVQGSKYAADRNHYRRYPRRRGPPRNYQQNYQNSESGEKNEGSESAPEGQAQQRRPYRRRRFPPYYMRRPYGRRPQYSNPPVQGEVMEGADNQGAGEQGRPVRQNMYRGYRPRFRRGPPRQRQPREDGNEEDKENQGDETQGQQPPQRRYRRNFNYRRRRPENPKPQDGKETKAADPPAENSSAPEAEQGGAE</sequence>
<dbReference type="EMBL" id="M95793">
    <property type="protein sequence ID" value="AAA30497.1"/>
    <property type="molecule type" value="mRNA"/>
</dbReference>
<dbReference type="EMBL" id="BC105363">
    <property type="protein sequence ID" value="AAI05364.1"/>
    <property type="molecule type" value="mRNA"/>
</dbReference>
<dbReference type="PIR" id="I39382">
    <property type="entry name" value="I39382"/>
</dbReference>
<dbReference type="PIR" id="JQ2292">
    <property type="entry name" value="JQ2292"/>
</dbReference>
<dbReference type="RefSeq" id="NP_777240.1">
    <property type="nucleotide sequence ID" value="NM_174815.2"/>
</dbReference>
<dbReference type="BMRB" id="P67808"/>
<dbReference type="SMR" id="P67808"/>
<dbReference type="FunCoup" id="P67808">
    <property type="interactions" value="1365"/>
</dbReference>
<dbReference type="STRING" id="9913.ENSBTAP00000023094"/>
<dbReference type="PaxDb" id="9913-ENSBTAP00000023094"/>
<dbReference type="PeptideAtlas" id="P67808"/>
<dbReference type="GeneID" id="287023"/>
<dbReference type="KEGG" id="bta:287023"/>
<dbReference type="CTD" id="4904"/>
<dbReference type="VEuPathDB" id="HostDB:ENSBTAG00000017368"/>
<dbReference type="eggNOG" id="KOG3070">
    <property type="taxonomic scope" value="Eukaryota"/>
</dbReference>
<dbReference type="InParanoid" id="P67808"/>
<dbReference type="OMA" id="RYYRRPF"/>
<dbReference type="OrthoDB" id="203339at2759"/>
<dbReference type="Reactome" id="R-BTA-72163">
    <property type="pathway name" value="mRNA Splicing - Major Pathway"/>
</dbReference>
<dbReference type="Reactome" id="R-BTA-72165">
    <property type="pathway name" value="mRNA Splicing - Minor Pathway"/>
</dbReference>
<dbReference type="Reactome" id="R-BTA-72203">
    <property type="pathway name" value="Processing of Capped Intron-Containing Pre-mRNA"/>
</dbReference>
<dbReference type="Reactome" id="R-BTA-877300">
    <property type="pathway name" value="Interferon gamma signaling"/>
</dbReference>
<dbReference type="Proteomes" id="UP000009136">
    <property type="component" value="Chromosome 3"/>
</dbReference>
<dbReference type="Bgee" id="ENSBTAG00000017368">
    <property type="expression patterns" value="Expressed in omental fat pad and 104 other cell types or tissues"/>
</dbReference>
<dbReference type="GO" id="GO:0010494">
    <property type="term" value="C:cytoplasmic stress granule"/>
    <property type="evidence" value="ECO:0000250"/>
    <property type="project" value="UniProtKB"/>
</dbReference>
<dbReference type="GO" id="GO:0070062">
    <property type="term" value="C:extracellular exosome"/>
    <property type="evidence" value="ECO:0000250"/>
    <property type="project" value="UniProtKB"/>
</dbReference>
<dbReference type="GO" id="GO:0071204">
    <property type="term" value="C:histone pre-mRNA 3'end processing complex"/>
    <property type="evidence" value="ECO:0000250"/>
    <property type="project" value="UniProtKB"/>
</dbReference>
<dbReference type="GO" id="GO:0005634">
    <property type="term" value="C:nucleus"/>
    <property type="evidence" value="ECO:0000318"/>
    <property type="project" value="GO_Central"/>
</dbReference>
<dbReference type="GO" id="GO:0000932">
    <property type="term" value="C:P-body"/>
    <property type="evidence" value="ECO:0007669"/>
    <property type="project" value="UniProtKB-SubCell"/>
</dbReference>
<dbReference type="GO" id="GO:1990904">
    <property type="term" value="C:ribonucleoprotein complex"/>
    <property type="evidence" value="ECO:0000250"/>
    <property type="project" value="UniProtKB"/>
</dbReference>
<dbReference type="GO" id="GO:0062153">
    <property type="term" value="F:C5-methylcytidine-containing RNA reader activity"/>
    <property type="evidence" value="ECO:0000250"/>
    <property type="project" value="UniProtKB"/>
</dbReference>
<dbReference type="GO" id="GO:0035198">
    <property type="term" value="F:miRNA binding"/>
    <property type="evidence" value="ECO:0000250"/>
    <property type="project" value="UniProtKB"/>
</dbReference>
<dbReference type="GO" id="GO:0003676">
    <property type="term" value="F:nucleic acid binding"/>
    <property type="evidence" value="ECO:0000318"/>
    <property type="project" value="GO_Central"/>
</dbReference>
<dbReference type="GO" id="GO:0003723">
    <property type="term" value="F:RNA binding"/>
    <property type="evidence" value="ECO:0000250"/>
    <property type="project" value="UniProtKB"/>
</dbReference>
<dbReference type="GO" id="GO:0003697">
    <property type="term" value="F:single-stranded DNA binding"/>
    <property type="evidence" value="ECO:0000250"/>
    <property type="project" value="AgBase"/>
</dbReference>
<dbReference type="GO" id="GO:0070934">
    <property type="term" value="P:CRD-mediated mRNA stabilization"/>
    <property type="evidence" value="ECO:0000250"/>
    <property type="project" value="UniProtKB"/>
</dbReference>
<dbReference type="GO" id="GO:0048598">
    <property type="term" value="P:embryonic morphogenesis"/>
    <property type="evidence" value="ECO:0000250"/>
    <property type="project" value="UniProtKB"/>
</dbReference>
<dbReference type="GO" id="GO:0008544">
    <property type="term" value="P:epidermis development"/>
    <property type="evidence" value="ECO:0000250"/>
    <property type="project" value="UniProtKB"/>
</dbReference>
<dbReference type="GO" id="GO:1990428">
    <property type="term" value="P:miRNA transport"/>
    <property type="evidence" value="ECO:0000250"/>
    <property type="project" value="UniProtKB"/>
</dbReference>
<dbReference type="GO" id="GO:0006397">
    <property type="term" value="P:mRNA processing"/>
    <property type="evidence" value="ECO:0007669"/>
    <property type="project" value="UniProtKB-KW"/>
</dbReference>
<dbReference type="GO" id="GO:0048255">
    <property type="term" value="P:mRNA stabilization"/>
    <property type="evidence" value="ECO:0000250"/>
    <property type="project" value="UniProtKB"/>
</dbReference>
<dbReference type="GO" id="GO:2000773">
    <property type="term" value="P:negative regulation of cellular senescence"/>
    <property type="evidence" value="ECO:0000250"/>
    <property type="project" value="UniProtKB"/>
</dbReference>
<dbReference type="GO" id="GO:0017148">
    <property type="term" value="P:negative regulation of translation"/>
    <property type="evidence" value="ECO:0000250"/>
    <property type="project" value="UniProtKB"/>
</dbReference>
<dbReference type="GO" id="GO:0051781">
    <property type="term" value="P:positive regulation of cell division"/>
    <property type="evidence" value="ECO:0007669"/>
    <property type="project" value="UniProtKB-KW"/>
</dbReference>
<dbReference type="GO" id="GO:0010468">
    <property type="term" value="P:regulation of gene expression"/>
    <property type="evidence" value="ECO:0000318"/>
    <property type="project" value="GO_Central"/>
</dbReference>
<dbReference type="GO" id="GO:0008380">
    <property type="term" value="P:RNA splicing"/>
    <property type="evidence" value="ECO:0007669"/>
    <property type="project" value="UniProtKB-KW"/>
</dbReference>
<dbReference type="GO" id="GO:0050658">
    <property type="term" value="P:RNA transport"/>
    <property type="evidence" value="ECO:0000250"/>
    <property type="project" value="UniProtKB"/>
</dbReference>
<dbReference type="GO" id="GO:0051031">
    <property type="term" value="P:tRNA transport"/>
    <property type="evidence" value="ECO:0000250"/>
    <property type="project" value="UniProtKB"/>
</dbReference>
<dbReference type="CDD" id="cd04458">
    <property type="entry name" value="CSP_CDS"/>
    <property type="match status" value="1"/>
</dbReference>
<dbReference type="FunFam" id="2.40.50.140:FF:000054">
    <property type="entry name" value="Nuclease-sensitive element-binding protein 1"/>
    <property type="match status" value="1"/>
</dbReference>
<dbReference type="Gene3D" id="2.40.50.140">
    <property type="entry name" value="Nucleic acid-binding proteins"/>
    <property type="match status" value="1"/>
</dbReference>
<dbReference type="InterPro" id="IPR050181">
    <property type="entry name" value="Cold_shock_domain"/>
</dbReference>
<dbReference type="InterPro" id="IPR011129">
    <property type="entry name" value="CSD"/>
</dbReference>
<dbReference type="InterPro" id="IPR019844">
    <property type="entry name" value="CSD_CS"/>
</dbReference>
<dbReference type="InterPro" id="IPR002059">
    <property type="entry name" value="CSP_DNA-bd"/>
</dbReference>
<dbReference type="InterPro" id="IPR012340">
    <property type="entry name" value="NA-bd_OB-fold"/>
</dbReference>
<dbReference type="PANTHER" id="PTHR11544">
    <property type="entry name" value="COLD SHOCK DOMAIN CONTAINING PROTEINS"/>
    <property type="match status" value="1"/>
</dbReference>
<dbReference type="Pfam" id="PF00313">
    <property type="entry name" value="CSD"/>
    <property type="match status" value="1"/>
</dbReference>
<dbReference type="PRINTS" id="PR00050">
    <property type="entry name" value="COLDSHOCK"/>
</dbReference>
<dbReference type="SMART" id="SM00357">
    <property type="entry name" value="CSP"/>
    <property type="match status" value="1"/>
</dbReference>
<dbReference type="SUPFAM" id="SSF50249">
    <property type="entry name" value="Nucleic acid-binding proteins"/>
    <property type="match status" value="1"/>
</dbReference>
<dbReference type="PROSITE" id="PS00352">
    <property type="entry name" value="CSD_1"/>
    <property type="match status" value="1"/>
</dbReference>
<dbReference type="PROSITE" id="PS51857">
    <property type="entry name" value="CSD_2"/>
    <property type="match status" value="1"/>
</dbReference>
<accession>P67808</accession>
<accession>P16990</accession>
<accession>P16991</accession>
<accession>Q2KJF8</accession>
<protein>
    <recommendedName>
        <fullName evidence="5">Y-box-binding protein 1</fullName>
        <shortName evidence="5">YB-1</shortName>
    </recommendedName>
    <alternativeName>
        <fullName evidence="5">DNA-binding protein B</fullName>
        <shortName evidence="5">DBPB</shortName>
    </alternativeName>
    <alternativeName>
        <fullName evidence="5">Enhancer factor I subunit A</fullName>
        <shortName evidence="5">EFI-A</shortName>
    </alternativeName>
    <alternativeName>
        <fullName>Y-box transcription factor</fullName>
    </alternativeName>
</protein>
<organism>
    <name type="scientific">Bos taurus</name>
    <name type="common">Bovine</name>
    <dbReference type="NCBI Taxonomy" id="9913"/>
    <lineage>
        <taxon>Eukaryota</taxon>
        <taxon>Metazoa</taxon>
        <taxon>Chordata</taxon>
        <taxon>Craniata</taxon>
        <taxon>Vertebrata</taxon>
        <taxon>Euteleostomi</taxon>
        <taxon>Mammalia</taxon>
        <taxon>Eutheria</taxon>
        <taxon>Laurasiatheria</taxon>
        <taxon>Artiodactyla</taxon>
        <taxon>Ruminantia</taxon>
        <taxon>Pecora</taxon>
        <taxon>Bovidae</taxon>
        <taxon>Bovinae</taxon>
        <taxon>Bos</taxon>
    </lineage>
</organism>
<feature type="initiator methionine" description="Removed" evidence="2">
    <location>
        <position position="1"/>
    </location>
</feature>
<feature type="chain" id="PRO_0000100218" description="Y-box-binding protein 1">
    <location>
        <begin position="2"/>
        <end position="324"/>
    </location>
</feature>
<feature type="domain" description="CSD">
    <location>
        <begin position="61"/>
        <end position="125"/>
    </location>
</feature>
<feature type="region of interest" description="Disordered" evidence="4">
    <location>
        <begin position="1"/>
        <end position="49"/>
    </location>
</feature>
<feature type="region of interest" description="Interaction with ss-DNA" evidence="2">
    <location>
        <begin position="15"/>
        <end position="71"/>
    </location>
</feature>
<feature type="region of interest" description="C5-methylcytosine binding" evidence="2">
    <location>
        <begin position="65"/>
        <end position="70"/>
    </location>
</feature>
<feature type="region of interest" description="Disordered" evidence="4">
    <location>
        <begin position="120"/>
        <end position="324"/>
    </location>
</feature>
<feature type="compositionally biased region" description="Gly residues" evidence="4">
    <location>
        <begin position="30"/>
        <end position="41"/>
    </location>
</feature>
<feature type="compositionally biased region" description="Basic residues" evidence="4">
    <location>
        <begin position="144"/>
        <end position="154"/>
    </location>
</feature>
<feature type="compositionally biased region" description="Low complexity" evidence="4">
    <location>
        <begin position="155"/>
        <end position="166"/>
    </location>
</feature>
<feature type="compositionally biased region" description="Low complexity" evidence="4">
    <location>
        <begin position="194"/>
        <end position="208"/>
    </location>
</feature>
<feature type="compositionally biased region" description="Basic residues" evidence="4">
    <location>
        <begin position="241"/>
        <end position="250"/>
    </location>
</feature>
<feature type="compositionally biased region" description="Basic residues" evidence="4">
    <location>
        <begin position="279"/>
        <end position="291"/>
    </location>
</feature>
<feature type="compositionally biased region" description="Basic and acidic residues" evidence="4">
    <location>
        <begin position="292"/>
        <end position="305"/>
    </location>
</feature>
<feature type="site" description="Important for C5-methylcytosine-recognition" evidence="2">
    <location>
        <position position="65"/>
    </location>
</feature>
<feature type="site" description="Cleavage; by 20S proteasomal protease" evidence="3">
    <location>
        <begin position="219"/>
        <end position="220"/>
    </location>
</feature>
<feature type="modified residue" description="N-acetylserine" evidence="2">
    <location>
        <position position="2"/>
    </location>
</feature>
<feature type="modified residue" description="Phosphoserine; by PKB/AKT1" evidence="2">
    <location>
        <position position="102"/>
    </location>
</feature>
<feature type="modified residue" description="Phosphotyrosine" evidence="2">
    <location>
        <position position="162"/>
    </location>
</feature>
<feature type="modified residue" description="Phosphoserine" evidence="2">
    <location>
        <position position="165"/>
    </location>
</feature>
<feature type="modified residue" description="Phosphoserine" evidence="2">
    <location>
        <position position="167"/>
    </location>
</feature>
<feature type="modified residue" description="Phosphoserine" evidence="2">
    <location>
        <position position="174"/>
    </location>
</feature>
<feature type="modified residue" description="Phosphoserine" evidence="2">
    <location>
        <position position="176"/>
    </location>
</feature>
<feature type="modified residue" description="N6-acetyllysine" evidence="2">
    <location>
        <position position="301"/>
    </location>
</feature>
<feature type="modified residue" description="N6-acetyllysine" evidence="2">
    <location>
        <position position="304"/>
    </location>
</feature>
<feature type="modified residue" description="Phosphoserine" evidence="2">
    <location>
        <position position="314"/>
    </location>
</feature>
<feature type="cross-link" description="Glycyl lysine isopeptide (Lys-Gly) (interchain with G-Cter in SUMO2)" evidence="2">
    <location>
        <position position="26"/>
    </location>
</feature>
<feature type="cross-link" description="Glycyl lysine isopeptide (Lys-Gly) (interchain with G-Cter in ubiquitin)" evidence="2">
    <location>
        <position position="137"/>
    </location>
</feature>
<proteinExistence type="evidence at transcript level"/>
<comment type="function">
    <text evidence="1 2 3">DNA- and RNA-binding protein involved in various processes, such as translational repression, RNA stabilization, mRNA splicing, DNA repair and transcription regulation. Predominantly acts as a RNA-binding protein: binds preferentially to the 5'-[CU]CUGCG-3' RNA motif and specifically recognizes mRNA transcripts modified by C5-methylcytosine (m5C). Promotes mRNA stabilization: acts by binding to m5C-containing mRNAs and recruiting the mRNA stability maintainer ELAVL1, thereby preventing mRNA decay. Component of the CRD-mediated complex that promotes MYC mRNA stability (By similarity). Contributes to the regulation of translation by modulating the interaction between the mRNA and eukaryotic initiation factors (By similarity). Plays a key role in RNA composition of extracellular exosomes by defining the sorting of small non-coding RNAs, such as tRNAs, Y RNAs, Vault RNAs and miRNAs. Probably sorts RNAs in exosomes by recognizing and binding C5-methylcytosine (m5C)-containing RNAs. Acts as a key effector of epidermal progenitors by preventing epidermal progenitor senescence: acts by regulating the translation of a senescence-associated subset of cytokine mRNAs, possibly by binding to m5C-containing mRNAs. Also involved in pre-mRNA alternative splicing regulation: binds to splice sites in pre-mRNA and regulates splice site selection. Binds to TSC22D1 transcripts, thereby inhibiting their translation and negatively regulating TGF-beta-mediated transcription of COL1A2 (By similarity). Also able to bind DNA: regulates transcription of the multidrug resistance gene MDR1 is enhanced in presence of the APEX1 acetylated form at 'Lys-6' and 'Lys-7'. Binds to promoters that contain a Y-box (5'-CTGATTGGCCAA-3'), such as MDR1 and HLA class II genes. Promotes separation of DNA strands that contain mismatches or are modified by cisplatin. Has endonucleolytic activity and can introduce nicks or breaks into double-stranded DNA, suggesting a role in DNA repair. The secreted form acts as an extracellular mitogen and stimulates cell migration and proliferation (By similarity).</text>
</comment>
<comment type="subunit">
    <text evidence="1 2">Homodimer in the presence of ATP. Component of the coding region determinant (CRD)-mediated complex, composed of DHX9, HNRNPU, IGF2BP1, SYNCRIP and YBX1. Identified in a IGF2BP1-dependent mRNP granule complex containing untranslated mRNAs. Component of the U11/U12 snRNPs that are part of the U12-type spliceosome (By similarity). Identified in a histone pre-mRNA complex, at least composed of ERI1, LSM11, SLBP, SNRPB, SYNCRIP and YBX1 (By similarity). Interacts with IGF2BP1 and RBBP6. Component of cytoplasmic messenger ribonucleoprotein particles (mRNPs). Interacts with AKT1, MBNL1, SFRS9, SFRS12, ALYREF/THOC4, MSH2, XRCC5, WRN and NCL. Interacts (via C-terminus) with APEX1 (via N-terminus); the interaction is increased with APEX1 acetylated at 'Lys-6' and 'Lys-7'. Interacts with AGO1 and AGO2. Interacts with ANKRD2. Interacts with DERA (By similarity). Interacts with FMR1; this interaction occurs in association with polyribosome. Interacts with ZBTB7B (By similarity). Interacts with HDGF. Interacts with ELAVL1; leading to ELAVL1 recruitment on C5-methylcytosine (m5C)-containing mRNAs and subsequent mRNA stability (By similarity). Interacts with PURB (By similarity).</text>
</comment>
<comment type="subcellular location">
    <subcellularLocation>
        <location evidence="2">Cytoplasm</location>
    </subcellularLocation>
    <subcellularLocation>
        <location evidence="2">Nucleus</location>
    </subcellularLocation>
    <subcellularLocation>
        <location evidence="2">Cytoplasmic granule</location>
    </subcellularLocation>
    <subcellularLocation>
        <location evidence="2">Secreted</location>
    </subcellularLocation>
    <subcellularLocation>
        <location evidence="2">Secreted</location>
        <location evidence="2">Extracellular exosome</location>
    </subcellularLocation>
    <subcellularLocation>
        <location evidence="1">Cytoplasm</location>
        <location evidence="1">P-body</location>
    </subcellularLocation>
    <text evidence="2">Predominantly cytoplasmic in proliferating cells. Cytotoxic stress and DNA damage enhance translocation to the nucleus. Localized in cytoplasmic mRNP granules containing untranslated mRNAs. Shuttles between nucleus and cytoplasm. Localized with DDX1, MBNL1 and TIAL1 in stress granules upon stress. Secreted by mesangial and monocytic cells after inflammatory challenges.</text>
</comment>
<comment type="domain">
    <text evidence="2">In the CSD domain, Trp-65 specifically recognizes C5-methylcytosine (m5C) modification through its indole ring.</text>
</comment>
<comment type="PTM">
    <text evidence="2">Ubiquitinated by RBBP6; leading to a decrease of YBX1 transactivational ability.</text>
</comment>
<comment type="PTM">
    <text evidence="1 2 3">Phosphorylated; increased by TGFB1 treatment (By similarity). Phosphorylation by PKB/AKT1 reduces interaction with cytoplasmic mRNA (By similarity). In the absence of phosphorylation the protein is retained in the cytoplasm (By similarity).</text>
</comment>
<comment type="PTM">
    <text evidence="3">Cleaved by a 20S proteasomal protease in response to agents that damage DNA. Cleavage takes place in the absence of ubiquitination and ATP. The resulting N-terminal fragment accumulates in the nucleus (By similarity).</text>
</comment>
<comment type="similarity">
    <text evidence="6">Belongs to the YBX1 family.</text>
</comment>
<gene>
    <name evidence="2" type="primary">YBX1</name>
    <name evidence="5" type="synonym">YB1</name>
</gene>